<protein>
    <recommendedName>
        <fullName evidence="1">Ribosomal RNA large subunit methyltransferase E</fullName>
        <ecNumber evidence="1">2.1.1.166</ecNumber>
    </recommendedName>
    <alternativeName>
        <fullName evidence="1">23S rRNA Um2552 methyltransferase</fullName>
    </alternativeName>
    <alternativeName>
        <fullName evidence="1">rRNA (uridine-2'-O-)-methyltransferase</fullName>
    </alternativeName>
</protein>
<dbReference type="EC" id="2.1.1.166" evidence="1"/>
<dbReference type="EMBL" id="CP001087">
    <property type="protein sequence ID" value="ACN13517.1"/>
    <property type="molecule type" value="Genomic_DNA"/>
</dbReference>
<dbReference type="RefSeq" id="WP_012662766.1">
    <property type="nucleotide sequence ID" value="NC_012108.1"/>
</dbReference>
<dbReference type="SMR" id="C0QGP2"/>
<dbReference type="STRING" id="177437.HRM2_03990"/>
<dbReference type="KEGG" id="dat:HRM2_03990"/>
<dbReference type="eggNOG" id="COG0293">
    <property type="taxonomic scope" value="Bacteria"/>
</dbReference>
<dbReference type="HOGENOM" id="CLU_009422_4_0_7"/>
<dbReference type="OrthoDB" id="9790080at2"/>
<dbReference type="Proteomes" id="UP000000442">
    <property type="component" value="Chromosome"/>
</dbReference>
<dbReference type="GO" id="GO:0005737">
    <property type="term" value="C:cytoplasm"/>
    <property type="evidence" value="ECO:0007669"/>
    <property type="project" value="UniProtKB-SubCell"/>
</dbReference>
<dbReference type="GO" id="GO:0008650">
    <property type="term" value="F:rRNA (uridine-2'-O-)-methyltransferase activity"/>
    <property type="evidence" value="ECO:0007669"/>
    <property type="project" value="UniProtKB-UniRule"/>
</dbReference>
<dbReference type="Gene3D" id="3.40.50.150">
    <property type="entry name" value="Vaccinia Virus protein VP39"/>
    <property type="match status" value="1"/>
</dbReference>
<dbReference type="HAMAP" id="MF_01547">
    <property type="entry name" value="RNA_methyltr_E"/>
    <property type="match status" value="1"/>
</dbReference>
<dbReference type="InterPro" id="IPR050082">
    <property type="entry name" value="RNA_methyltr_RlmE"/>
</dbReference>
<dbReference type="InterPro" id="IPR002877">
    <property type="entry name" value="RNA_MeTrfase_FtsJ_dom"/>
</dbReference>
<dbReference type="InterPro" id="IPR015507">
    <property type="entry name" value="rRNA-MeTfrase_E"/>
</dbReference>
<dbReference type="InterPro" id="IPR029063">
    <property type="entry name" value="SAM-dependent_MTases_sf"/>
</dbReference>
<dbReference type="PANTHER" id="PTHR10920">
    <property type="entry name" value="RIBOSOMAL RNA METHYLTRANSFERASE"/>
    <property type="match status" value="1"/>
</dbReference>
<dbReference type="PANTHER" id="PTHR10920:SF18">
    <property type="entry name" value="RRNA METHYLTRANSFERASE 2, MITOCHONDRIAL"/>
    <property type="match status" value="1"/>
</dbReference>
<dbReference type="Pfam" id="PF01728">
    <property type="entry name" value="FtsJ"/>
    <property type="match status" value="1"/>
</dbReference>
<dbReference type="PIRSF" id="PIRSF005461">
    <property type="entry name" value="23S_rRNA_mtase"/>
    <property type="match status" value="1"/>
</dbReference>
<dbReference type="SUPFAM" id="SSF53335">
    <property type="entry name" value="S-adenosyl-L-methionine-dependent methyltransferases"/>
    <property type="match status" value="1"/>
</dbReference>
<reference key="1">
    <citation type="journal article" date="2009" name="Environ. Microbiol.">
        <title>Genome sequence of Desulfobacterium autotrophicum HRM2, a marine sulfate reducer oxidizing organic carbon completely to carbon dioxide.</title>
        <authorList>
            <person name="Strittmatter A.W."/>
            <person name="Liesegang H."/>
            <person name="Rabus R."/>
            <person name="Decker I."/>
            <person name="Amann J."/>
            <person name="Andres S."/>
            <person name="Henne A."/>
            <person name="Fricke W.F."/>
            <person name="Martinez-Arias R."/>
            <person name="Bartels D."/>
            <person name="Goesmann A."/>
            <person name="Krause L."/>
            <person name="Puehler A."/>
            <person name="Klenk H.P."/>
            <person name="Richter M."/>
            <person name="Schuler M."/>
            <person name="Gloeckner F.O."/>
            <person name="Meyerdierks A."/>
            <person name="Gottschalk G."/>
            <person name="Amann R."/>
        </authorList>
    </citation>
    <scope>NUCLEOTIDE SEQUENCE [LARGE SCALE GENOMIC DNA]</scope>
    <source>
        <strain>ATCC 43914 / DSM 3382 / VKM B-1955 / HRM2</strain>
    </source>
</reference>
<keyword id="KW-0963">Cytoplasm</keyword>
<keyword id="KW-0489">Methyltransferase</keyword>
<keyword id="KW-1185">Reference proteome</keyword>
<keyword id="KW-0698">rRNA processing</keyword>
<keyword id="KW-0949">S-adenosyl-L-methionine</keyword>
<keyword id="KW-0808">Transferase</keyword>
<evidence type="ECO:0000255" key="1">
    <source>
        <dbReference type="HAMAP-Rule" id="MF_01547"/>
    </source>
</evidence>
<feature type="chain" id="PRO_1000215451" description="Ribosomal RNA large subunit methyltransferase E">
    <location>
        <begin position="1"/>
        <end position="203"/>
    </location>
</feature>
<feature type="active site" description="Proton acceptor" evidence="1">
    <location>
        <position position="159"/>
    </location>
</feature>
<feature type="binding site" evidence="1">
    <location>
        <position position="59"/>
    </location>
    <ligand>
        <name>S-adenosyl-L-methionine</name>
        <dbReference type="ChEBI" id="CHEBI:59789"/>
    </ligand>
</feature>
<feature type="binding site" evidence="1">
    <location>
        <position position="61"/>
    </location>
    <ligand>
        <name>S-adenosyl-L-methionine</name>
        <dbReference type="ChEBI" id="CHEBI:59789"/>
    </ligand>
</feature>
<feature type="binding site" evidence="1">
    <location>
        <position position="79"/>
    </location>
    <ligand>
        <name>S-adenosyl-L-methionine</name>
        <dbReference type="ChEBI" id="CHEBI:59789"/>
    </ligand>
</feature>
<feature type="binding site" evidence="1">
    <location>
        <position position="97"/>
    </location>
    <ligand>
        <name>S-adenosyl-L-methionine</name>
        <dbReference type="ChEBI" id="CHEBI:59789"/>
    </ligand>
</feature>
<feature type="binding site" evidence="1">
    <location>
        <position position="119"/>
    </location>
    <ligand>
        <name>S-adenosyl-L-methionine</name>
        <dbReference type="ChEBI" id="CHEBI:59789"/>
    </ligand>
</feature>
<comment type="function">
    <text evidence="1">Specifically methylates the uridine in position 2552 of 23S rRNA at the 2'-O position of the ribose in the fully assembled 50S ribosomal subunit.</text>
</comment>
<comment type="catalytic activity">
    <reaction evidence="1">
        <text>uridine(2552) in 23S rRNA + S-adenosyl-L-methionine = 2'-O-methyluridine(2552) in 23S rRNA + S-adenosyl-L-homocysteine + H(+)</text>
        <dbReference type="Rhea" id="RHEA:42720"/>
        <dbReference type="Rhea" id="RHEA-COMP:10202"/>
        <dbReference type="Rhea" id="RHEA-COMP:10203"/>
        <dbReference type="ChEBI" id="CHEBI:15378"/>
        <dbReference type="ChEBI" id="CHEBI:57856"/>
        <dbReference type="ChEBI" id="CHEBI:59789"/>
        <dbReference type="ChEBI" id="CHEBI:65315"/>
        <dbReference type="ChEBI" id="CHEBI:74478"/>
        <dbReference type="EC" id="2.1.1.166"/>
    </reaction>
</comment>
<comment type="subcellular location">
    <subcellularLocation>
        <location evidence="1">Cytoplasm</location>
    </subcellularLocation>
</comment>
<comment type="similarity">
    <text evidence="1">Belongs to the class I-like SAM-binding methyltransferase superfamily. RNA methyltransferase RlmE family.</text>
</comment>
<name>RLME_DESAH</name>
<gene>
    <name evidence="1" type="primary">rlmE</name>
    <name evidence="1" type="synonym">ftsJ</name>
    <name evidence="1" type="synonym">rrmJ</name>
    <name type="ordered locus">HRM2_03990</name>
</gene>
<accession>C0QGP2</accession>
<sequence>MKNRGRTKPKKNQWADHYTQKARDENYPARSVYKLMEIQKRFQVIKKGASVLDLGCAPGSWLIHAAELTGPSGRAVGIDLKPVDAALPPNAIAHTGDIFEMESTLGEAVGQDYDAVISDMAPATTGRKDIDAARSFALCEAALRVACGLLADGGNFVCKIFQGAEFKQFENQVKSRFTSHKIFKPDSCRKSSKEIYIIGLGKK</sequence>
<organism>
    <name type="scientific">Desulforapulum autotrophicum (strain ATCC 43914 / DSM 3382 / VKM B-1955 / HRM2)</name>
    <name type="common">Desulfobacterium autotrophicum</name>
    <dbReference type="NCBI Taxonomy" id="177437"/>
    <lineage>
        <taxon>Bacteria</taxon>
        <taxon>Pseudomonadati</taxon>
        <taxon>Thermodesulfobacteriota</taxon>
        <taxon>Desulfobacteria</taxon>
        <taxon>Desulfobacterales</taxon>
        <taxon>Desulfobacteraceae</taxon>
        <taxon>Desulforapulum</taxon>
    </lineage>
</organism>
<proteinExistence type="inferred from homology"/>